<feature type="chain" id="PRO_0000318617" description="Phosphoglucosamine mutase">
    <location>
        <begin position="1"/>
        <end position="452"/>
    </location>
</feature>
<feature type="active site" description="Phosphoserine intermediate" evidence="1">
    <location>
        <position position="108"/>
    </location>
</feature>
<feature type="binding site" description="via phosphate group" evidence="1">
    <location>
        <position position="108"/>
    </location>
    <ligand>
        <name>Mg(2+)</name>
        <dbReference type="ChEBI" id="CHEBI:18420"/>
    </ligand>
</feature>
<feature type="binding site" evidence="1">
    <location>
        <position position="247"/>
    </location>
    <ligand>
        <name>Mg(2+)</name>
        <dbReference type="ChEBI" id="CHEBI:18420"/>
    </ligand>
</feature>
<feature type="binding site" evidence="1">
    <location>
        <position position="249"/>
    </location>
    <ligand>
        <name>Mg(2+)</name>
        <dbReference type="ChEBI" id="CHEBI:18420"/>
    </ligand>
</feature>
<feature type="binding site" evidence="1">
    <location>
        <position position="251"/>
    </location>
    <ligand>
        <name>Mg(2+)</name>
        <dbReference type="ChEBI" id="CHEBI:18420"/>
    </ligand>
</feature>
<feature type="modified residue" description="Phosphoserine" evidence="1">
    <location>
        <position position="108"/>
    </location>
</feature>
<organism>
    <name type="scientific">Burkholderia mallei (strain NCTC 10247)</name>
    <dbReference type="NCBI Taxonomy" id="320389"/>
    <lineage>
        <taxon>Bacteria</taxon>
        <taxon>Pseudomonadati</taxon>
        <taxon>Pseudomonadota</taxon>
        <taxon>Betaproteobacteria</taxon>
        <taxon>Burkholderiales</taxon>
        <taxon>Burkholderiaceae</taxon>
        <taxon>Burkholderia</taxon>
        <taxon>pseudomallei group</taxon>
    </lineage>
</organism>
<gene>
    <name evidence="1" type="primary">glmM</name>
    <name type="ordered locus">BMA10247_0573</name>
</gene>
<evidence type="ECO:0000255" key="1">
    <source>
        <dbReference type="HAMAP-Rule" id="MF_01554"/>
    </source>
</evidence>
<evidence type="ECO:0000305" key="2"/>
<keyword id="KW-0413">Isomerase</keyword>
<keyword id="KW-0460">Magnesium</keyword>
<keyword id="KW-0479">Metal-binding</keyword>
<keyword id="KW-0597">Phosphoprotein</keyword>
<sequence length="452" mass="47624">MGRRYFGTDGIRGKVGDAPITPDFVLRLGYAAGKVLASAPGRAASGARPTVLIGKDTRVSGYMLEAALEAGFSAAGVDVMLAGPMPTPGVAYLTRALRLSAGVVISASHNPYHDNGIKFFSADGNKLPDEIEAEIEAWLDKPLDCAASDGLGKARRLDDAAGRYIEFCKSTFPAAFDLRGMKLVVDCAHGAAYQVAPHVFHELGADVIPIGVAPNGFNINDGVGATAPDALMRAVRANHADLGIALDGDADRLLVVDHTGRLYNGDELLYVLVKDRIATNGQVEGAVGTLMTNFAVEVALKEAGVQFVRAAVGDRYVLEQLRERGWQLGAEGSGHILSLDRHSTGDGIVSALLVLAALKRSGKTLAQMLEGVTLFPQKLINVRMKPGADWKGSEAIRRAIDSAEQALSGSGRVLIRASGTEPVLRVMVEARQATDANRHAEAIADAVKQATA</sequence>
<dbReference type="EC" id="5.4.2.10" evidence="1"/>
<dbReference type="EMBL" id="CP000548">
    <property type="protein sequence ID" value="ABO04218.1"/>
    <property type="status" value="ALT_INIT"/>
    <property type="molecule type" value="Genomic_DNA"/>
</dbReference>
<dbReference type="RefSeq" id="WP_004266863.1">
    <property type="nucleotide sequence ID" value="NZ_CP007802.1"/>
</dbReference>
<dbReference type="SMR" id="A3MIQ6"/>
<dbReference type="GeneID" id="93059857"/>
<dbReference type="KEGG" id="bmaz:BM44_2458"/>
<dbReference type="KEGG" id="bmn:BMA10247_0573"/>
<dbReference type="PATRIC" id="fig|320389.8.peg.2773"/>
<dbReference type="GO" id="GO:0005829">
    <property type="term" value="C:cytosol"/>
    <property type="evidence" value="ECO:0007669"/>
    <property type="project" value="TreeGrafter"/>
</dbReference>
<dbReference type="GO" id="GO:0000287">
    <property type="term" value="F:magnesium ion binding"/>
    <property type="evidence" value="ECO:0007669"/>
    <property type="project" value="UniProtKB-UniRule"/>
</dbReference>
<dbReference type="GO" id="GO:0008966">
    <property type="term" value="F:phosphoglucosamine mutase activity"/>
    <property type="evidence" value="ECO:0007669"/>
    <property type="project" value="UniProtKB-UniRule"/>
</dbReference>
<dbReference type="GO" id="GO:0004615">
    <property type="term" value="F:phosphomannomutase activity"/>
    <property type="evidence" value="ECO:0007669"/>
    <property type="project" value="TreeGrafter"/>
</dbReference>
<dbReference type="GO" id="GO:0005975">
    <property type="term" value="P:carbohydrate metabolic process"/>
    <property type="evidence" value="ECO:0007669"/>
    <property type="project" value="InterPro"/>
</dbReference>
<dbReference type="GO" id="GO:0009252">
    <property type="term" value="P:peptidoglycan biosynthetic process"/>
    <property type="evidence" value="ECO:0007669"/>
    <property type="project" value="TreeGrafter"/>
</dbReference>
<dbReference type="GO" id="GO:0006048">
    <property type="term" value="P:UDP-N-acetylglucosamine biosynthetic process"/>
    <property type="evidence" value="ECO:0007669"/>
    <property type="project" value="TreeGrafter"/>
</dbReference>
<dbReference type="CDD" id="cd05802">
    <property type="entry name" value="GlmM"/>
    <property type="match status" value="1"/>
</dbReference>
<dbReference type="FunFam" id="3.30.310.50:FF:000001">
    <property type="entry name" value="Phosphoglucosamine mutase"/>
    <property type="match status" value="1"/>
</dbReference>
<dbReference type="FunFam" id="3.40.120.10:FF:000001">
    <property type="entry name" value="Phosphoglucosamine mutase"/>
    <property type="match status" value="1"/>
</dbReference>
<dbReference type="FunFam" id="3.40.120.10:FF:000003">
    <property type="entry name" value="Phosphoglucosamine mutase"/>
    <property type="match status" value="1"/>
</dbReference>
<dbReference type="Gene3D" id="3.40.120.10">
    <property type="entry name" value="Alpha-D-Glucose-1,6-Bisphosphate, subunit A, domain 3"/>
    <property type="match status" value="3"/>
</dbReference>
<dbReference type="Gene3D" id="3.30.310.50">
    <property type="entry name" value="Alpha-D-phosphohexomutase, C-terminal domain"/>
    <property type="match status" value="1"/>
</dbReference>
<dbReference type="HAMAP" id="MF_01554_B">
    <property type="entry name" value="GlmM_B"/>
    <property type="match status" value="1"/>
</dbReference>
<dbReference type="InterPro" id="IPR005844">
    <property type="entry name" value="A-D-PHexomutase_a/b/a-I"/>
</dbReference>
<dbReference type="InterPro" id="IPR016055">
    <property type="entry name" value="A-D-PHexomutase_a/b/a-I/II/III"/>
</dbReference>
<dbReference type="InterPro" id="IPR005845">
    <property type="entry name" value="A-D-PHexomutase_a/b/a-II"/>
</dbReference>
<dbReference type="InterPro" id="IPR005846">
    <property type="entry name" value="A-D-PHexomutase_a/b/a-III"/>
</dbReference>
<dbReference type="InterPro" id="IPR005843">
    <property type="entry name" value="A-D-PHexomutase_C"/>
</dbReference>
<dbReference type="InterPro" id="IPR036900">
    <property type="entry name" value="A-D-PHexomutase_C_sf"/>
</dbReference>
<dbReference type="InterPro" id="IPR016066">
    <property type="entry name" value="A-D-PHexomutase_CS"/>
</dbReference>
<dbReference type="InterPro" id="IPR005841">
    <property type="entry name" value="Alpha-D-phosphohexomutase_SF"/>
</dbReference>
<dbReference type="InterPro" id="IPR006352">
    <property type="entry name" value="GlmM_bact"/>
</dbReference>
<dbReference type="InterPro" id="IPR050060">
    <property type="entry name" value="Phosphoglucosamine_mutase"/>
</dbReference>
<dbReference type="NCBIfam" id="TIGR01455">
    <property type="entry name" value="glmM"/>
    <property type="match status" value="1"/>
</dbReference>
<dbReference type="NCBIfam" id="NF008139">
    <property type="entry name" value="PRK10887.1"/>
    <property type="match status" value="1"/>
</dbReference>
<dbReference type="PANTHER" id="PTHR42946:SF1">
    <property type="entry name" value="PHOSPHOGLUCOMUTASE (ALPHA-D-GLUCOSE-1,6-BISPHOSPHATE-DEPENDENT)"/>
    <property type="match status" value="1"/>
</dbReference>
<dbReference type="PANTHER" id="PTHR42946">
    <property type="entry name" value="PHOSPHOHEXOSE MUTASE"/>
    <property type="match status" value="1"/>
</dbReference>
<dbReference type="Pfam" id="PF02878">
    <property type="entry name" value="PGM_PMM_I"/>
    <property type="match status" value="1"/>
</dbReference>
<dbReference type="Pfam" id="PF02879">
    <property type="entry name" value="PGM_PMM_II"/>
    <property type="match status" value="1"/>
</dbReference>
<dbReference type="Pfam" id="PF02880">
    <property type="entry name" value="PGM_PMM_III"/>
    <property type="match status" value="1"/>
</dbReference>
<dbReference type="Pfam" id="PF00408">
    <property type="entry name" value="PGM_PMM_IV"/>
    <property type="match status" value="1"/>
</dbReference>
<dbReference type="PRINTS" id="PR00509">
    <property type="entry name" value="PGMPMM"/>
</dbReference>
<dbReference type="SUPFAM" id="SSF55957">
    <property type="entry name" value="Phosphoglucomutase, C-terminal domain"/>
    <property type="match status" value="1"/>
</dbReference>
<dbReference type="SUPFAM" id="SSF53738">
    <property type="entry name" value="Phosphoglucomutase, first 3 domains"/>
    <property type="match status" value="3"/>
</dbReference>
<dbReference type="PROSITE" id="PS00710">
    <property type="entry name" value="PGM_PMM"/>
    <property type="match status" value="1"/>
</dbReference>
<comment type="function">
    <text evidence="1">Catalyzes the conversion of glucosamine-6-phosphate to glucosamine-1-phosphate.</text>
</comment>
<comment type="catalytic activity">
    <reaction evidence="1">
        <text>alpha-D-glucosamine 1-phosphate = D-glucosamine 6-phosphate</text>
        <dbReference type="Rhea" id="RHEA:23424"/>
        <dbReference type="ChEBI" id="CHEBI:58516"/>
        <dbReference type="ChEBI" id="CHEBI:58725"/>
        <dbReference type="EC" id="5.4.2.10"/>
    </reaction>
</comment>
<comment type="cofactor">
    <cofactor evidence="1">
        <name>Mg(2+)</name>
        <dbReference type="ChEBI" id="CHEBI:18420"/>
    </cofactor>
    <text evidence="1">Binds 1 Mg(2+) ion per subunit.</text>
</comment>
<comment type="PTM">
    <text evidence="1">Activated by phosphorylation.</text>
</comment>
<comment type="similarity">
    <text evidence="1">Belongs to the phosphohexose mutase family.</text>
</comment>
<comment type="sequence caution" evidence="2">
    <conflict type="erroneous initiation">
        <sequence resource="EMBL-CDS" id="ABO04218"/>
    </conflict>
</comment>
<protein>
    <recommendedName>
        <fullName evidence="1">Phosphoglucosamine mutase</fullName>
        <ecNumber evidence="1">5.4.2.10</ecNumber>
    </recommendedName>
</protein>
<name>GLMM_BURM7</name>
<proteinExistence type="inferred from homology"/>
<accession>A3MIQ6</accession>
<reference key="1">
    <citation type="journal article" date="2010" name="Genome Biol. Evol.">
        <title>Continuing evolution of Burkholderia mallei through genome reduction and large-scale rearrangements.</title>
        <authorList>
            <person name="Losada L."/>
            <person name="Ronning C.M."/>
            <person name="DeShazer D."/>
            <person name="Woods D."/>
            <person name="Fedorova N."/>
            <person name="Kim H.S."/>
            <person name="Shabalina S.A."/>
            <person name="Pearson T.R."/>
            <person name="Brinkac L."/>
            <person name="Tan P."/>
            <person name="Nandi T."/>
            <person name="Crabtree J."/>
            <person name="Badger J."/>
            <person name="Beckstrom-Sternberg S."/>
            <person name="Saqib M."/>
            <person name="Schutzer S.E."/>
            <person name="Keim P."/>
            <person name="Nierman W.C."/>
        </authorList>
    </citation>
    <scope>NUCLEOTIDE SEQUENCE [LARGE SCALE GENOMIC DNA]</scope>
    <source>
        <strain>NCTC 10247</strain>
    </source>
</reference>